<organism>
    <name type="scientific">Catenulispora acidiphila (strain DSM 44928 / JCM 14897 / NBRC 102108 / NRRL B-24433 / ID139908)</name>
    <dbReference type="NCBI Taxonomy" id="479433"/>
    <lineage>
        <taxon>Bacteria</taxon>
        <taxon>Bacillati</taxon>
        <taxon>Actinomycetota</taxon>
        <taxon>Actinomycetes</taxon>
        <taxon>Catenulisporales</taxon>
        <taxon>Catenulisporaceae</taxon>
        <taxon>Catenulispora</taxon>
    </lineage>
</organism>
<dbReference type="EMBL" id="CP001700">
    <property type="protein sequence ID" value="ACU73274.1"/>
    <property type="molecule type" value="Genomic_DNA"/>
</dbReference>
<dbReference type="RefSeq" id="WP_015793003.1">
    <property type="nucleotide sequence ID" value="NC_013131.1"/>
</dbReference>
<dbReference type="SMR" id="C7PW26"/>
<dbReference type="STRING" id="479433.Caci_4410"/>
<dbReference type="KEGG" id="cai:Caci_4410"/>
<dbReference type="eggNOG" id="COG4948">
    <property type="taxonomic scope" value="Bacteria"/>
</dbReference>
<dbReference type="HOGENOM" id="CLU_030273_6_1_11"/>
<dbReference type="InParanoid" id="C7PW26"/>
<dbReference type="Proteomes" id="UP000000851">
    <property type="component" value="Chromosome"/>
</dbReference>
<dbReference type="GO" id="GO:0000287">
    <property type="term" value="F:magnesium ion binding"/>
    <property type="evidence" value="ECO:0000250"/>
    <property type="project" value="UniProtKB"/>
</dbReference>
<dbReference type="GO" id="GO:0009063">
    <property type="term" value="P:amino acid catabolic process"/>
    <property type="evidence" value="ECO:0007669"/>
    <property type="project" value="InterPro"/>
</dbReference>
<dbReference type="FunFam" id="3.20.20.120:FF:000005">
    <property type="entry name" value="Putative L-rhamnonate dehydratase"/>
    <property type="match status" value="1"/>
</dbReference>
<dbReference type="Gene3D" id="3.20.20.120">
    <property type="entry name" value="Enolase-like C-terminal domain"/>
    <property type="match status" value="1"/>
</dbReference>
<dbReference type="Gene3D" id="3.30.390.10">
    <property type="entry name" value="Enolase-like, N-terminal domain"/>
    <property type="match status" value="1"/>
</dbReference>
<dbReference type="InterPro" id="IPR034593">
    <property type="entry name" value="DgoD-like"/>
</dbReference>
<dbReference type="InterPro" id="IPR036849">
    <property type="entry name" value="Enolase-like_C_sf"/>
</dbReference>
<dbReference type="InterPro" id="IPR029017">
    <property type="entry name" value="Enolase-like_N"/>
</dbReference>
<dbReference type="InterPro" id="IPR029065">
    <property type="entry name" value="Enolase_C-like"/>
</dbReference>
<dbReference type="InterPro" id="IPR018110">
    <property type="entry name" value="Mandel_Rmase/mucon_lact_enz_CS"/>
</dbReference>
<dbReference type="InterPro" id="IPR013342">
    <property type="entry name" value="Mandelate_racemase_C"/>
</dbReference>
<dbReference type="InterPro" id="IPR013341">
    <property type="entry name" value="Mandelate_racemase_N_dom"/>
</dbReference>
<dbReference type="PANTHER" id="PTHR48080">
    <property type="entry name" value="D-GALACTONATE DEHYDRATASE-RELATED"/>
    <property type="match status" value="1"/>
</dbReference>
<dbReference type="PANTHER" id="PTHR48080:SF6">
    <property type="entry name" value="STARVATION-SENSING PROTEIN RSPA"/>
    <property type="match status" value="1"/>
</dbReference>
<dbReference type="Pfam" id="PF13378">
    <property type="entry name" value="MR_MLE_C"/>
    <property type="match status" value="1"/>
</dbReference>
<dbReference type="Pfam" id="PF02746">
    <property type="entry name" value="MR_MLE_N"/>
    <property type="match status" value="1"/>
</dbReference>
<dbReference type="SFLD" id="SFLDS00001">
    <property type="entry name" value="Enolase"/>
    <property type="match status" value="1"/>
</dbReference>
<dbReference type="SMART" id="SM00922">
    <property type="entry name" value="MR_MLE"/>
    <property type="match status" value="1"/>
</dbReference>
<dbReference type="SUPFAM" id="SSF51604">
    <property type="entry name" value="Enolase C-terminal domain-like"/>
    <property type="match status" value="1"/>
</dbReference>
<dbReference type="SUPFAM" id="SSF54826">
    <property type="entry name" value="Enolase N-terminal domain-like"/>
    <property type="match status" value="1"/>
</dbReference>
<dbReference type="PROSITE" id="PS00908">
    <property type="entry name" value="MR_MLE_1"/>
    <property type="match status" value="1"/>
</dbReference>
<feature type="chain" id="PRO_0000429902" description="D-galactonate dehydratase family member Caci_4410">
    <location>
        <begin position="1"/>
        <end position="429"/>
    </location>
</feature>
<feature type="region of interest" description="Disordered" evidence="2">
    <location>
        <begin position="1"/>
        <end position="22"/>
    </location>
</feature>
<feature type="binding site" evidence="1">
    <location>
        <position position="233"/>
    </location>
    <ligand>
        <name>Mg(2+)</name>
        <dbReference type="ChEBI" id="CHEBI:18420"/>
    </ligand>
</feature>
<feature type="binding site" evidence="1">
    <location>
        <position position="235"/>
    </location>
    <ligand>
        <name>D-arabinonate</name>
        <dbReference type="ChEBI" id="CHEBI:16157"/>
    </ligand>
</feature>
<feature type="binding site" evidence="1">
    <location>
        <position position="259"/>
    </location>
    <ligand>
        <name>Mg(2+)</name>
        <dbReference type="ChEBI" id="CHEBI:18420"/>
    </ligand>
</feature>
<feature type="binding site" evidence="1">
    <location>
        <position position="285"/>
    </location>
    <ligand>
        <name>D-arabinonate</name>
        <dbReference type="ChEBI" id="CHEBI:16157"/>
    </ligand>
</feature>
<feature type="binding site" evidence="1">
    <location>
        <position position="285"/>
    </location>
    <ligand>
        <name>Mg(2+)</name>
        <dbReference type="ChEBI" id="CHEBI:18420"/>
    </ligand>
</feature>
<feature type="binding site" evidence="1">
    <location>
        <position position="306"/>
    </location>
    <ligand>
        <name>D-arabinonate</name>
        <dbReference type="ChEBI" id="CHEBI:16157"/>
    </ligand>
</feature>
<feature type="binding site" evidence="1">
    <location>
        <position position="335"/>
    </location>
    <ligand>
        <name>D-arabinonate</name>
        <dbReference type="ChEBI" id="CHEBI:16157"/>
    </ligand>
</feature>
<feature type="binding site" evidence="1">
    <location>
        <position position="362"/>
    </location>
    <ligand>
        <name>D-arabinonate</name>
        <dbReference type="ChEBI" id="CHEBI:16157"/>
    </ligand>
</feature>
<sequence>MTDANHLLDPSGALPQTRPPWTSRDSLRITRVRAIVTAPEGQPLVVVRVDTSDDGLYGLGCATFTQRYAAVAAAVDEHVGPLAVGRHPADIEDITRLIHYSSYWRSGPVLNNALSGLDQALWDIAGKRAGMPVYELLGGRSRSAVEVYSHAAGGTIEATLDQAEELLAEGYRNVRLQLGGPGLGTYGAPGTLGGYPRSPHPDGWAVEQYLRDAPRLFAAARERLGDSVNLMHDVHSRLTPKQAVVLARALEPYRLSFLEDVIAPELYDRLPEVRAASPVPIAVGEQIGSVPDAVRLVRDGGVDLLRLHTSAVGGLTPTRKIVALCELLGVRTAFHSPADVSPVGVAANLAVDISTPAFGYQESHTYNDATHEVFPGTRVVREGHLYPAEEPGWGIEIDERAAAKFPPVKFLHERWSSGVRRPDGGLEAP</sequence>
<keyword id="KW-0460">Magnesium</keyword>
<keyword id="KW-0479">Metal-binding</keyword>
<keyword id="KW-1185">Reference proteome</keyword>
<evidence type="ECO:0000250" key="1"/>
<evidence type="ECO:0000256" key="2">
    <source>
        <dbReference type="SAM" id="MobiDB-lite"/>
    </source>
</evidence>
<evidence type="ECO:0000269" key="3">
    <source>
    </source>
</evidence>
<evidence type="ECO:0000305" key="4"/>
<reference key="1">
    <citation type="journal article" date="2009" name="Stand. Genomic Sci.">
        <title>Complete genome sequence of Catenulispora acidiphila type strain (ID 139908).</title>
        <authorList>
            <person name="Copeland A."/>
            <person name="Lapidus A."/>
            <person name="Glavina Del Rio T."/>
            <person name="Nolan M."/>
            <person name="Lucas S."/>
            <person name="Chen F."/>
            <person name="Tice H."/>
            <person name="Cheng J.F."/>
            <person name="Bruce D."/>
            <person name="Goodwin L."/>
            <person name="Pitluck S."/>
            <person name="Mikhailova N."/>
            <person name="Pati A."/>
            <person name="Ivanova N."/>
            <person name="Mavromatis K."/>
            <person name="Chen A."/>
            <person name="Palaniappan K."/>
            <person name="Chain P."/>
            <person name="Land M."/>
            <person name="Hauser L."/>
            <person name="Chang Y.J."/>
            <person name="Jeffries C.D."/>
            <person name="Chertkov O."/>
            <person name="Brettin T."/>
            <person name="Detter J.C."/>
            <person name="Han C."/>
            <person name="Ali Z."/>
            <person name="Tindall B.J."/>
            <person name="Goker M."/>
            <person name="Bristow J."/>
            <person name="Eisen J.A."/>
            <person name="Markowitz V."/>
            <person name="Hugenholtz P."/>
            <person name="Kyrpides N.C."/>
            <person name="Klenk H.P."/>
        </authorList>
    </citation>
    <scope>NUCLEOTIDE SEQUENCE [LARGE SCALE GENOMIC DNA]</scope>
    <source>
        <strain>DSM 44928 / JCM 14897 / NBRC 102108 / NRRL B-24433 / ID139908</strain>
    </source>
</reference>
<reference key="2">
    <citation type="journal article" date="2014" name="Biochemistry">
        <title>Discovery of function in the enolase superfamily: D-mannonate and D-gluconate dehydratases in the D-mannonate dehydratase subgroup.</title>
        <authorList>
            <person name="Wichelecki D.J."/>
            <person name="Balthazor B.M."/>
            <person name="Chau A.C."/>
            <person name="Vetting M.W."/>
            <person name="Fedorov A.A."/>
            <person name="Fedorov E.V."/>
            <person name="Lukk T."/>
            <person name="Patskovsky Y.V."/>
            <person name="Stead M.B."/>
            <person name="Hillerich B.S."/>
            <person name="Seidel R.D."/>
            <person name="Almo S.C."/>
            <person name="Gerlt J.A."/>
        </authorList>
    </citation>
    <scope>FUNCTION</scope>
    <scope>LACK OF D-MANNONATE DEHYDRATASE ACTIVITY</scope>
    <source>
        <strain>DSM 44928 / JCM 14897 / NBRC 102108 / NRRL B-24433 / ID139908</strain>
    </source>
</reference>
<gene>
    <name type="ordered locus">Caci_4410</name>
</gene>
<accession>C7PW26</accession>
<proteinExistence type="inferred from homology"/>
<name>IMAND_CATAD</name>
<comment type="function">
    <text evidence="3">Has no detectable activity with D-mannonate and with a panel of 70 other acid sugars (in vitro), in spite of the conservation of the residues that are expected to be important for catalytic activity and cofactor binding. May have evolved a divergent function.</text>
</comment>
<comment type="similarity">
    <text evidence="4">Belongs to the mandelate racemase/muconate lactonizing enzyme family. GalD subfamily.</text>
</comment>
<protein>
    <recommendedName>
        <fullName>D-galactonate dehydratase family member Caci_4410</fullName>
    </recommendedName>
</protein>